<reference key="1">
    <citation type="journal article" date="2009" name="Appl. Environ. Microbiol.">
        <title>Rhizobium sp. strain NGR234 possesses a remarkable number of secretion systems.</title>
        <authorList>
            <person name="Schmeisser C."/>
            <person name="Liesegang H."/>
            <person name="Krysciak D."/>
            <person name="Bakkou N."/>
            <person name="Le Quere A."/>
            <person name="Wollherr A."/>
            <person name="Heinemeyer I."/>
            <person name="Morgenstern B."/>
            <person name="Pommerening-Roeser A."/>
            <person name="Flores M."/>
            <person name="Palacios R."/>
            <person name="Brenner S."/>
            <person name="Gottschalk G."/>
            <person name="Schmitz R.A."/>
            <person name="Broughton W.J."/>
            <person name="Perret X."/>
            <person name="Strittmatter A.W."/>
            <person name="Streit W.R."/>
        </authorList>
    </citation>
    <scope>NUCLEOTIDE SEQUENCE [LARGE SCALE GENOMIC DNA]</scope>
    <source>
        <strain>NBRC 101917 / NGR234</strain>
    </source>
</reference>
<feature type="chain" id="PRO_1000166491" description="Small ribosomal subunit protein uS17">
    <location>
        <begin position="1"/>
        <end position="78"/>
    </location>
</feature>
<keyword id="KW-1185">Reference proteome</keyword>
<keyword id="KW-0687">Ribonucleoprotein</keyword>
<keyword id="KW-0689">Ribosomal protein</keyword>
<keyword id="KW-0694">RNA-binding</keyword>
<keyword id="KW-0699">rRNA-binding</keyword>
<protein>
    <recommendedName>
        <fullName evidence="1">Small ribosomal subunit protein uS17</fullName>
    </recommendedName>
    <alternativeName>
        <fullName evidence="2">30S ribosomal protein S17</fullName>
    </alternativeName>
</protein>
<accession>C3MAY9</accession>
<gene>
    <name evidence="1" type="primary">rpsQ</name>
    <name type="ordered locus">NGR_c12000</name>
</gene>
<comment type="function">
    <text evidence="1">One of the primary rRNA binding proteins, it binds specifically to the 5'-end of 16S ribosomal RNA.</text>
</comment>
<comment type="subunit">
    <text evidence="1">Part of the 30S ribosomal subunit.</text>
</comment>
<comment type="similarity">
    <text evidence="1">Belongs to the universal ribosomal protein uS17 family.</text>
</comment>
<sequence>MPKRILQGTVVSDKNDKTVVVKVERRFAHPILQKTVRRSKKYKAHDENNQYKVGDVVSIEECAPISKDKRWTVIAAQA</sequence>
<proteinExistence type="inferred from homology"/>
<name>RS17_SINFN</name>
<dbReference type="EMBL" id="CP001389">
    <property type="protein sequence ID" value="ACP24982.1"/>
    <property type="molecule type" value="Genomic_DNA"/>
</dbReference>
<dbReference type="RefSeq" id="WP_012707760.1">
    <property type="nucleotide sequence ID" value="NC_012587.1"/>
</dbReference>
<dbReference type="RefSeq" id="YP_002825735.1">
    <property type="nucleotide sequence ID" value="NC_012587.1"/>
</dbReference>
<dbReference type="SMR" id="C3MAY9"/>
<dbReference type="STRING" id="394.NGR_c12000"/>
<dbReference type="KEGG" id="rhi:NGR_c12000"/>
<dbReference type="PATRIC" id="fig|394.7.peg.4016"/>
<dbReference type="eggNOG" id="COG0186">
    <property type="taxonomic scope" value="Bacteria"/>
</dbReference>
<dbReference type="HOGENOM" id="CLU_073626_1_1_5"/>
<dbReference type="OrthoDB" id="9811714at2"/>
<dbReference type="Proteomes" id="UP000001054">
    <property type="component" value="Chromosome"/>
</dbReference>
<dbReference type="GO" id="GO:0022627">
    <property type="term" value="C:cytosolic small ribosomal subunit"/>
    <property type="evidence" value="ECO:0007669"/>
    <property type="project" value="TreeGrafter"/>
</dbReference>
<dbReference type="GO" id="GO:0019843">
    <property type="term" value="F:rRNA binding"/>
    <property type="evidence" value="ECO:0007669"/>
    <property type="project" value="UniProtKB-UniRule"/>
</dbReference>
<dbReference type="GO" id="GO:0003735">
    <property type="term" value="F:structural constituent of ribosome"/>
    <property type="evidence" value="ECO:0007669"/>
    <property type="project" value="InterPro"/>
</dbReference>
<dbReference type="GO" id="GO:0006412">
    <property type="term" value="P:translation"/>
    <property type="evidence" value="ECO:0007669"/>
    <property type="project" value="UniProtKB-UniRule"/>
</dbReference>
<dbReference type="CDD" id="cd00364">
    <property type="entry name" value="Ribosomal_uS17"/>
    <property type="match status" value="1"/>
</dbReference>
<dbReference type="Gene3D" id="2.40.50.140">
    <property type="entry name" value="Nucleic acid-binding proteins"/>
    <property type="match status" value="1"/>
</dbReference>
<dbReference type="HAMAP" id="MF_01345_B">
    <property type="entry name" value="Ribosomal_uS17_B"/>
    <property type="match status" value="1"/>
</dbReference>
<dbReference type="InterPro" id="IPR012340">
    <property type="entry name" value="NA-bd_OB-fold"/>
</dbReference>
<dbReference type="InterPro" id="IPR000266">
    <property type="entry name" value="Ribosomal_uS17"/>
</dbReference>
<dbReference type="InterPro" id="IPR019984">
    <property type="entry name" value="Ribosomal_uS17_bact/chlr"/>
</dbReference>
<dbReference type="NCBIfam" id="NF004123">
    <property type="entry name" value="PRK05610.1"/>
    <property type="match status" value="1"/>
</dbReference>
<dbReference type="NCBIfam" id="TIGR03635">
    <property type="entry name" value="uS17_bact"/>
    <property type="match status" value="1"/>
</dbReference>
<dbReference type="PANTHER" id="PTHR10744">
    <property type="entry name" value="40S RIBOSOMAL PROTEIN S11 FAMILY MEMBER"/>
    <property type="match status" value="1"/>
</dbReference>
<dbReference type="PANTHER" id="PTHR10744:SF1">
    <property type="entry name" value="SMALL RIBOSOMAL SUBUNIT PROTEIN US17M"/>
    <property type="match status" value="1"/>
</dbReference>
<dbReference type="Pfam" id="PF00366">
    <property type="entry name" value="Ribosomal_S17"/>
    <property type="match status" value="1"/>
</dbReference>
<dbReference type="PRINTS" id="PR00973">
    <property type="entry name" value="RIBOSOMALS17"/>
</dbReference>
<dbReference type="SUPFAM" id="SSF50249">
    <property type="entry name" value="Nucleic acid-binding proteins"/>
    <property type="match status" value="1"/>
</dbReference>
<evidence type="ECO:0000255" key="1">
    <source>
        <dbReference type="HAMAP-Rule" id="MF_01345"/>
    </source>
</evidence>
<evidence type="ECO:0000305" key="2"/>
<organism>
    <name type="scientific">Sinorhizobium fredii (strain NBRC 101917 / NGR234)</name>
    <dbReference type="NCBI Taxonomy" id="394"/>
    <lineage>
        <taxon>Bacteria</taxon>
        <taxon>Pseudomonadati</taxon>
        <taxon>Pseudomonadota</taxon>
        <taxon>Alphaproteobacteria</taxon>
        <taxon>Hyphomicrobiales</taxon>
        <taxon>Rhizobiaceae</taxon>
        <taxon>Sinorhizobium/Ensifer group</taxon>
        <taxon>Sinorhizobium</taxon>
    </lineage>
</organism>